<evidence type="ECO:0000255" key="1">
    <source>
        <dbReference type="HAMAP-Rule" id="MF_00040"/>
    </source>
</evidence>
<evidence type="ECO:0000256" key="2">
    <source>
        <dbReference type="SAM" id="MobiDB-lite"/>
    </source>
</evidence>
<keyword id="KW-0963">Cytoplasm</keyword>
<keyword id="KW-0648">Protein biosynthesis</keyword>
<keyword id="KW-1185">Reference proteome</keyword>
<sequence length="185" mass="20828">MIDEALFDAEEKMEKAVAVARDDLSTIRTGRANPGMFSRITIDYYGAATPITQLASINVPEARLVVIKPYEANQLRAIETAIRNSDLGVNPTNDGALIRVAVPQLTEERRRELVKQAKHKGEEAKVSVRNIRRKAMEELHRIRKEGEAGEDEVGRAEKDLDKTTHQYVTQIDELVKHKEGELLEV</sequence>
<organism>
    <name type="scientific">Mycobacterium bovis (strain ATCC BAA-935 / AF2122/97)</name>
    <dbReference type="NCBI Taxonomy" id="233413"/>
    <lineage>
        <taxon>Bacteria</taxon>
        <taxon>Bacillati</taxon>
        <taxon>Actinomycetota</taxon>
        <taxon>Actinomycetes</taxon>
        <taxon>Mycobacteriales</taxon>
        <taxon>Mycobacteriaceae</taxon>
        <taxon>Mycobacterium</taxon>
        <taxon>Mycobacterium tuberculosis complex</taxon>
    </lineage>
</organism>
<dbReference type="EMBL" id="LT708304">
    <property type="protein sequence ID" value="SIU01527.1"/>
    <property type="molecule type" value="Genomic_DNA"/>
</dbReference>
<dbReference type="RefSeq" id="NP_856551.1">
    <property type="nucleotide sequence ID" value="NC_002945.3"/>
</dbReference>
<dbReference type="RefSeq" id="WP_003414663.1">
    <property type="nucleotide sequence ID" value="NC_002945.4"/>
</dbReference>
<dbReference type="SMR" id="P66735"/>
<dbReference type="GeneID" id="45426870"/>
<dbReference type="KEGG" id="mbo:BQ2027_MB2906C"/>
<dbReference type="PATRIC" id="fig|233413.5.peg.3189"/>
<dbReference type="Proteomes" id="UP000001419">
    <property type="component" value="Chromosome"/>
</dbReference>
<dbReference type="GO" id="GO:0005737">
    <property type="term" value="C:cytoplasm"/>
    <property type="evidence" value="ECO:0007669"/>
    <property type="project" value="UniProtKB-SubCell"/>
</dbReference>
<dbReference type="GO" id="GO:0043023">
    <property type="term" value="F:ribosomal large subunit binding"/>
    <property type="evidence" value="ECO:0007669"/>
    <property type="project" value="TreeGrafter"/>
</dbReference>
<dbReference type="GO" id="GO:0006415">
    <property type="term" value="P:translational termination"/>
    <property type="evidence" value="ECO:0007669"/>
    <property type="project" value="UniProtKB-UniRule"/>
</dbReference>
<dbReference type="CDD" id="cd00520">
    <property type="entry name" value="RRF"/>
    <property type="match status" value="1"/>
</dbReference>
<dbReference type="FunFam" id="1.10.132.20:FF:000001">
    <property type="entry name" value="Ribosome-recycling factor"/>
    <property type="match status" value="1"/>
</dbReference>
<dbReference type="FunFam" id="3.30.1360.40:FF:000001">
    <property type="entry name" value="Ribosome-recycling factor"/>
    <property type="match status" value="1"/>
</dbReference>
<dbReference type="Gene3D" id="3.30.1360.40">
    <property type="match status" value="1"/>
</dbReference>
<dbReference type="Gene3D" id="1.10.132.20">
    <property type="entry name" value="Ribosome-recycling factor"/>
    <property type="match status" value="1"/>
</dbReference>
<dbReference type="HAMAP" id="MF_00040">
    <property type="entry name" value="RRF"/>
    <property type="match status" value="1"/>
</dbReference>
<dbReference type="InterPro" id="IPR002661">
    <property type="entry name" value="Ribosome_recyc_fac"/>
</dbReference>
<dbReference type="InterPro" id="IPR023584">
    <property type="entry name" value="Ribosome_recyc_fac_dom"/>
</dbReference>
<dbReference type="InterPro" id="IPR036191">
    <property type="entry name" value="RRF_sf"/>
</dbReference>
<dbReference type="NCBIfam" id="TIGR00496">
    <property type="entry name" value="frr"/>
    <property type="match status" value="1"/>
</dbReference>
<dbReference type="PANTHER" id="PTHR20982:SF3">
    <property type="entry name" value="MITOCHONDRIAL RIBOSOME RECYCLING FACTOR PSEUDO 1"/>
    <property type="match status" value="1"/>
</dbReference>
<dbReference type="PANTHER" id="PTHR20982">
    <property type="entry name" value="RIBOSOME RECYCLING FACTOR"/>
    <property type="match status" value="1"/>
</dbReference>
<dbReference type="Pfam" id="PF01765">
    <property type="entry name" value="RRF"/>
    <property type="match status" value="1"/>
</dbReference>
<dbReference type="SUPFAM" id="SSF55194">
    <property type="entry name" value="Ribosome recycling factor, RRF"/>
    <property type="match status" value="1"/>
</dbReference>
<accession>P66735</accession>
<accession>A0A1R3Y2M4</accession>
<accession>Q10794</accession>
<accession>X2BM41</accession>
<protein>
    <recommendedName>
        <fullName evidence="1">Ribosome-recycling factor</fullName>
        <shortName evidence="1">RRF</shortName>
    </recommendedName>
    <alternativeName>
        <fullName evidence="1">Ribosome-releasing factor</fullName>
    </alternativeName>
</protein>
<comment type="function">
    <text evidence="1">Responsible for the release of ribosomes from messenger RNA at the termination of protein biosynthesis. May increase the efficiency of translation by recycling ribosomes from one round of translation to another.</text>
</comment>
<comment type="subcellular location">
    <subcellularLocation>
        <location evidence="1">Cytoplasm</location>
    </subcellularLocation>
</comment>
<comment type="similarity">
    <text evidence="1">Belongs to the RRF family.</text>
</comment>
<name>RRF_MYCBO</name>
<reference key="1">
    <citation type="journal article" date="2003" name="Proc. Natl. Acad. Sci. U.S.A.">
        <title>The complete genome sequence of Mycobacterium bovis.</title>
        <authorList>
            <person name="Garnier T."/>
            <person name="Eiglmeier K."/>
            <person name="Camus J.-C."/>
            <person name="Medina N."/>
            <person name="Mansoor H."/>
            <person name="Pryor M."/>
            <person name="Duthoy S."/>
            <person name="Grondin S."/>
            <person name="Lacroix C."/>
            <person name="Monsempe C."/>
            <person name="Simon S."/>
            <person name="Harris B."/>
            <person name="Atkin R."/>
            <person name="Doggett J."/>
            <person name="Mayes R."/>
            <person name="Keating L."/>
            <person name="Wheeler P.R."/>
            <person name="Parkhill J."/>
            <person name="Barrell B.G."/>
            <person name="Cole S.T."/>
            <person name="Gordon S.V."/>
            <person name="Hewinson R.G."/>
        </authorList>
    </citation>
    <scope>NUCLEOTIDE SEQUENCE [LARGE SCALE GENOMIC DNA]</scope>
    <source>
        <strain>ATCC BAA-935 / AF2122/97</strain>
    </source>
</reference>
<reference key="2">
    <citation type="journal article" date="2017" name="Genome Announc.">
        <title>Updated reference genome sequence and annotation of Mycobacterium bovis AF2122/97.</title>
        <authorList>
            <person name="Malone K.M."/>
            <person name="Farrell D."/>
            <person name="Stuber T.P."/>
            <person name="Schubert O.T."/>
            <person name="Aebersold R."/>
            <person name="Robbe-Austerman S."/>
            <person name="Gordon S.V."/>
        </authorList>
    </citation>
    <scope>NUCLEOTIDE SEQUENCE [LARGE SCALE GENOMIC DNA]</scope>
    <scope>GENOME REANNOTATION</scope>
    <source>
        <strain>ATCC BAA-935 / AF2122/97</strain>
    </source>
</reference>
<proteinExistence type="inferred from homology"/>
<feature type="chain" id="PRO_0000167490" description="Ribosome-recycling factor">
    <location>
        <begin position="1"/>
        <end position="185"/>
    </location>
</feature>
<feature type="region of interest" description="Disordered" evidence="2">
    <location>
        <begin position="144"/>
        <end position="164"/>
    </location>
</feature>
<gene>
    <name evidence="1" type="primary">frr</name>
    <name type="ordered locus">BQ2027_MB2906C</name>
</gene>